<name>THII_LEVBA</name>
<dbReference type="EC" id="2.8.1.4" evidence="1"/>
<dbReference type="EMBL" id="CP000416">
    <property type="protein sequence ID" value="ABJ64360.1"/>
    <property type="molecule type" value="Genomic_DNA"/>
</dbReference>
<dbReference type="RefSeq" id="WP_011668124.1">
    <property type="nucleotide sequence ID" value="NC_008497.1"/>
</dbReference>
<dbReference type="SMR" id="Q03R12"/>
<dbReference type="STRING" id="387344.LVIS_1255"/>
<dbReference type="GeneID" id="56992597"/>
<dbReference type="KEGG" id="lbr:LVIS_1255"/>
<dbReference type="eggNOG" id="COG0301">
    <property type="taxonomic scope" value="Bacteria"/>
</dbReference>
<dbReference type="HOGENOM" id="CLU_037952_4_0_9"/>
<dbReference type="UniPathway" id="UPA00060"/>
<dbReference type="Proteomes" id="UP000001652">
    <property type="component" value="Chromosome"/>
</dbReference>
<dbReference type="GO" id="GO:0005829">
    <property type="term" value="C:cytosol"/>
    <property type="evidence" value="ECO:0007669"/>
    <property type="project" value="TreeGrafter"/>
</dbReference>
<dbReference type="GO" id="GO:0005524">
    <property type="term" value="F:ATP binding"/>
    <property type="evidence" value="ECO:0007669"/>
    <property type="project" value="UniProtKB-UniRule"/>
</dbReference>
<dbReference type="GO" id="GO:0004810">
    <property type="term" value="F:CCA tRNA nucleotidyltransferase activity"/>
    <property type="evidence" value="ECO:0007669"/>
    <property type="project" value="InterPro"/>
</dbReference>
<dbReference type="GO" id="GO:0000049">
    <property type="term" value="F:tRNA binding"/>
    <property type="evidence" value="ECO:0007669"/>
    <property type="project" value="UniProtKB-UniRule"/>
</dbReference>
<dbReference type="GO" id="GO:0140741">
    <property type="term" value="F:tRNA-uracil-4 sulfurtransferase activity"/>
    <property type="evidence" value="ECO:0007669"/>
    <property type="project" value="UniProtKB-EC"/>
</dbReference>
<dbReference type="GO" id="GO:0009228">
    <property type="term" value="P:thiamine biosynthetic process"/>
    <property type="evidence" value="ECO:0007669"/>
    <property type="project" value="UniProtKB-KW"/>
</dbReference>
<dbReference type="GO" id="GO:0009229">
    <property type="term" value="P:thiamine diphosphate biosynthetic process"/>
    <property type="evidence" value="ECO:0007669"/>
    <property type="project" value="UniProtKB-UniRule"/>
</dbReference>
<dbReference type="GO" id="GO:0052837">
    <property type="term" value="P:thiazole biosynthetic process"/>
    <property type="evidence" value="ECO:0007669"/>
    <property type="project" value="TreeGrafter"/>
</dbReference>
<dbReference type="GO" id="GO:0002937">
    <property type="term" value="P:tRNA 4-thiouridine biosynthesis"/>
    <property type="evidence" value="ECO:0007669"/>
    <property type="project" value="TreeGrafter"/>
</dbReference>
<dbReference type="CDD" id="cd01712">
    <property type="entry name" value="PPase_ThiI"/>
    <property type="match status" value="1"/>
</dbReference>
<dbReference type="CDD" id="cd11716">
    <property type="entry name" value="THUMP_ThiI"/>
    <property type="match status" value="1"/>
</dbReference>
<dbReference type="FunFam" id="3.40.50.620:FF:000053">
    <property type="entry name" value="Probable tRNA sulfurtransferase"/>
    <property type="match status" value="1"/>
</dbReference>
<dbReference type="Gene3D" id="3.30.2130.30">
    <property type="match status" value="1"/>
</dbReference>
<dbReference type="Gene3D" id="3.40.50.620">
    <property type="entry name" value="HUPs"/>
    <property type="match status" value="1"/>
</dbReference>
<dbReference type="HAMAP" id="MF_00021">
    <property type="entry name" value="ThiI"/>
    <property type="match status" value="1"/>
</dbReference>
<dbReference type="InterPro" id="IPR014729">
    <property type="entry name" value="Rossmann-like_a/b/a_fold"/>
</dbReference>
<dbReference type="InterPro" id="IPR020536">
    <property type="entry name" value="ThiI_AANH"/>
</dbReference>
<dbReference type="InterPro" id="IPR054173">
    <property type="entry name" value="ThiI_fer"/>
</dbReference>
<dbReference type="InterPro" id="IPR049961">
    <property type="entry name" value="ThiI_N"/>
</dbReference>
<dbReference type="InterPro" id="IPR004114">
    <property type="entry name" value="THUMP_dom"/>
</dbReference>
<dbReference type="InterPro" id="IPR049962">
    <property type="entry name" value="THUMP_ThiI"/>
</dbReference>
<dbReference type="InterPro" id="IPR003720">
    <property type="entry name" value="tRNA_STrfase"/>
</dbReference>
<dbReference type="InterPro" id="IPR050102">
    <property type="entry name" value="tRNA_sulfurtransferase_ThiI"/>
</dbReference>
<dbReference type="NCBIfam" id="TIGR00342">
    <property type="entry name" value="tRNA uracil 4-sulfurtransferase ThiI"/>
    <property type="match status" value="1"/>
</dbReference>
<dbReference type="PANTHER" id="PTHR43209">
    <property type="entry name" value="TRNA SULFURTRANSFERASE"/>
    <property type="match status" value="1"/>
</dbReference>
<dbReference type="PANTHER" id="PTHR43209:SF1">
    <property type="entry name" value="TRNA SULFURTRANSFERASE"/>
    <property type="match status" value="1"/>
</dbReference>
<dbReference type="Pfam" id="PF02568">
    <property type="entry name" value="ThiI"/>
    <property type="match status" value="1"/>
</dbReference>
<dbReference type="Pfam" id="PF22025">
    <property type="entry name" value="ThiI_fer"/>
    <property type="match status" value="1"/>
</dbReference>
<dbReference type="Pfam" id="PF02926">
    <property type="entry name" value="THUMP"/>
    <property type="match status" value="1"/>
</dbReference>
<dbReference type="SMART" id="SM00981">
    <property type="entry name" value="THUMP"/>
    <property type="match status" value="1"/>
</dbReference>
<dbReference type="SUPFAM" id="SSF52402">
    <property type="entry name" value="Adenine nucleotide alpha hydrolases-like"/>
    <property type="match status" value="1"/>
</dbReference>
<dbReference type="SUPFAM" id="SSF143437">
    <property type="entry name" value="THUMP domain-like"/>
    <property type="match status" value="1"/>
</dbReference>
<dbReference type="PROSITE" id="PS51165">
    <property type="entry name" value="THUMP"/>
    <property type="match status" value="1"/>
</dbReference>
<keyword id="KW-0067">ATP-binding</keyword>
<keyword id="KW-0963">Cytoplasm</keyword>
<keyword id="KW-0547">Nucleotide-binding</keyword>
<keyword id="KW-1185">Reference proteome</keyword>
<keyword id="KW-0694">RNA-binding</keyword>
<keyword id="KW-0784">Thiamine biosynthesis</keyword>
<keyword id="KW-0808">Transferase</keyword>
<keyword id="KW-0820">tRNA-binding</keyword>
<reference key="1">
    <citation type="journal article" date="2006" name="Proc. Natl. Acad. Sci. U.S.A.">
        <title>Comparative genomics of the lactic acid bacteria.</title>
        <authorList>
            <person name="Makarova K.S."/>
            <person name="Slesarev A."/>
            <person name="Wolf Y.I."/>
            <person name="Sorokin A."/>
            <person name="Mirkin B."/>
            <person name="Koonin E.V."/>
            <person name="Pavlov A."/>
            <person name="Pavlova N."/>
            <person name="Karamychev V."/>
            <person name="Polouchine N."/>
            <person name="Shakhova V."/>
            <person name="Grigoriev I."/>
            <person name="Lou Y."/>
            <person name="Rohksar D."/>
            <person name="Lucas S."/>
            <person name="Huang K."/>
            <person name="Goodstein D.M."/>
            <person name="Hawkins T."/>
            <person name="Plengvidhya V."/>
            <person name="Welker D."/>
            <person name="Hughes J."/>
            <person name="Goh Y."/>
            <person name="Benson A."/>
            <person name="Baldwin K."/>
            <person name="Lee J.-H."/>
            <person name="Diaz-Muniz I."/>
            <person name="Dosti B."/>
            <person name="Smeianov V."/>
            <person name="Wechter W."/>
            <person name="Barabote R."/>
            <person name="Lorca G."/>
            <person name="Altermann E."/>
            <person name="Barrangou R."/>
            <person name="Ganesan B."/>
            <person name="Xie Y."/>
            <person name="Rawsthorne H."/>
            <person name="Tamir D."/>
            <person name="Parker C."/>
            <person name="Breidt F."/>
            <person name="Broadbent J.R."/>
            <person name="Hutkins R."/>
            <person name="O'Sullivan D."/>
            <person name="Steele J."/>
            <person name="Unlu G."/>
            <person name="Saier M.H. Jr."/>
            <person name="Klaenhammer T."/>
            <person name="Richardson P."/>
            <person name="Kozyavkin S."/>
            <person name="Weimer B.C."/>
            <person name="Mills D.A."/>
        </authorList>
    </citation>
    <scope>NUCLEOTIDE SEQUENCE [LARGE SCALE GENOMIC DNA]</scope>
    <source>
        <strain>ATCC 367 / BCRC 12310 / CIP 105137 / JCM 1170 / LMG 11437 / NCIMB 947 / NCTC 947</strain>
    </source>
</reference>
<accession>Q03R12</accession>
<feature type="chain" id="PRO_1000074233" description="Probable tRNA sulfurtransferase">
    <location>
        <begin position="1"/>
        <end position="405"/>
    </location>
</feature>
<feature type="domain" description="THUMP" evidence="1">
    <location>
        <begin position="60"/>
        <end position="165"/>
    </location>
</feature>
<feature type="binding site" evidence="1">
    <location>
        <begin position="183"/>
        <end position="184"/>
    </location>
    <ligand>
        <name>ATP</name>
        <dbReference type="ChEBI" id="CHEBI:30616"/>
    </ligand>
</feature>
<feature type="binding site" evidence="1">
    <location>
        <begin position="208"/>
        <end position="209"/>
    </location>
    <ligand>
        <name>ATP</name>
        <dbReference type="ChEBI" id="CHEBI:30616"/>
    </ligand>
</feature>
<feature type="binding site" evidence="1">
    <location>
        <position position="265"/>
    </location>
    <ligand>
        <name>ATP</name>
        <dbReference type="ChEBI" id="CHEBI:30616"/>
    </ligand>
</feature>
<feature type="binding site" evidence="1">
    <location>
        <position position="287"/>
    </location>
    <ligand>
        <name>ATP</name>
        <dbReference type="ChEBI" id="CHEBI:30616"/>
    </ligand>
</feature>
<feature type="binding site" evidence="1">
    <location>
        <position position="296"/>
    </location>
    <ligand>
        <name>ATP</name>
        <dbReference type="ChEBI" id="CHEBI:30616"/>
    </ligand>
</feature>
<organism>
    <name type="scientific">Levilactobacillus brevis (strain ATCC 367 / BCRC 12310 / CIP 105137 / JCM 1170 / LMG 11437 / NCIMB 947 / NCTC 947)</name>
    <name type="common">Lactobacillus brevis</name>
    <dbReference type="NCBI Taxonomy" id="387344"/>
    <lineage>
        <taxon>Bacteria</taxon>
        <taxon>Bacillati</taxon>
        <taxon>Bacillota</taxon>
        <taxon>Bacilli</taxon>
        <taxon>Lactobacillales</taxon>
        <taxon>Lactobacillaceae</taxon>
        <taxon>Levilactobacillus</taxon>
    </lineage>
</organism>
<proteinExistence type="inferred from homology"/>
<protein>
    <recommendedName>
        <fullName evidence="1">Probable tRNA sulfurtransferase</fullName>
        <ecNumber evidence="1">2.8.1.4</ecNumber>
    </recommendedName>
    <alternativeName>
        <fullName evidence="1">Sulfur carrier protein ThiS sulfurtransferase</fullName>
    </alternativeName>
    <alternativeName>
        <fullName evidence="1">Thiamine biosynthesis protein ThiI</fullName>
    </alternativeName>
    <alternativeName>
        <fullName evidence="1">tRNA 4-thiouridine synthase</fullName>
    </alternativeName>
</protein>
<sequence length="405" mass="45071">MEYSEIMVRYGELSTKGKNKKDFIKQLGQNTRKALHQFDGIEVKAQHDRLHVTLNGADSTAVMDRLKGVFGIENFSPSVKVEKDIAAIKATALAMVQEIFTPGMTFKINTRRQDKQFEYDTNHLNDLLGGYILENVPGIQVKMKQPDLTLRVEVRLNGVFLSGQTIQGAGGLPVGTGGKAVMMLSGGIDSPVAAYYGMRRGVKLDMVHFFSPPYTSEQALAKAKELTARLAGYSGSIQFIQVPFTKIQETIKEKVPEGYLMTIQRRLMLRLAAAVAERRHAKGIFNGESLGQVASQTLESMAAINDVTSMPILRPLLSMDKTEIIKVAENIDTYDLSILPYEDCCTIFTPPAPKTHPDLEKSRKYEKYIDVDGLMQEALDGMIITDIHPDDNYLNQNEDVFAELL</sequence>
<comment type="function">
    <text evidence="1">Catalyzes the ATP-dependent transfer of a sulfur to tRNA to produce 4-thiouridine in position 8 of tRNAs, which functions as a near-UV photosensor. Also catalyzes the transfer of sulfur to the sulfur carrier protein ThiS, forming ThiS-thiocarboxylate. This is a step in the synthesis of thiazole, in the thiamine biosynthesis pathway. The sulfur is donated as persulfide by IscS.</text>
</comment>
<comment type="catalytic activity">
    <reaction evidence="1">
        <text>[ThiI sulfur-carrier protein]-S-sulfanyl-L-cysteine + a uridine in tRNA + 2 reduced [2Fe-2S]-[ferredoxin] + ATP + H(+) = [ThiI sulfur-carrier protein]-L-cysteine + a 4-thiouridine in tRNA + 2 oxidized [2Fe-2S]-[ferredoxin] + AMP + diphosphate</text>
        <dbReference type="Rhea" id="RHEA:24176"/>
        <dbReference type="Rhea" id="RHEA-COMP:10000"/>
        <dbReference type="Rhea" id="RHEA-COMP:10001"/>
        <dbReference type="Rhea" id="RHEA-COMP:13337"/>
        <dbReference type="Rhea" id="RHEA-COMP:13338"/>
        <dbReference type="Rhea" id="RHEA-COMP:13339"/>
        <dbReference type="Rhea" id="RHEA-COMP:13340"/>
        <dbReference type="ChEBI" id="CHEBI:15378"/>
        <dbReference type="ChEBI" id="CHEBI:29950"/>
        <dbReference type="ChEBI" id="CHEBI:30616"/>
        <dbReference type="ChEBI" id="CHEBI:33019"/>
        <dbReference type="ChEBI" id="CHEBI:33737"/>
        <dbReference type="ChEBI" id="CHEBI:33738"/>
        <dbReference type="ChEBI" id="CHEBI:61963"/>
        <dbReference type="ChEBI" id="CHEBI:65315"/>
        <dbReference type="ChEBI" id="CHEBI:136798"/>
        <dbReference type="ChEBI" id="CHEBI:456215"/>
        <dbReference type="EC" id="2.8.1.4"/>
    </reaction>
</comment>
<comment type="catalytic activity">
    <reaction evidence="1">
        <text>[ThiS sulfur-carrier protein]-C-terminal Gly-Gly-AMP + S-sulfanyl-L-cysteinyl-[cysteine desulfurase] + AH2 = [ThiS sulfur-carrier protein]-C-terminal-Gly-aminoethanethioate + L-cysteinyl-[cysteine desulfurase] + A + AMP + 2 H(+)</text>
        <dbReference type="Rhea" id="RHEA:43340"/>
        <dbReference type="Rhea" id="RHEA-COMP:12157"/>
        <dbReference type="Rhea" id="RHEA-COMP:12158"/>
        <dbReference type="Rhea" id="RHEA-COMP:12910"/>
        <dbReference type="Rhea" id="RHEA-COMP:19908"/>
        <dbReference type="ChEBI" id="CHEBI:13193"/>
        <dbReference type="ChEBI" id="CHEBI:15378"/>
        <dbReference type="ChEBI" id="CHEBI:17499"/>
        <dbReference type="ChEBI" id="CHEBI:29950"/>
        <dbReference type="ChEBI" id="CHEBI:61963"/>
        <dbReference type="ChEBI" id="CHEBI:90618"/>
        <dbReference type="ChEBI" id="CHEBI:232372"/>
        <dbReference type="ChEBI" id="CHEBI:456215"/>
    </reaction>
</comment>
<comment type="pathway">
    <text evidence="1">Cofactor biosynthesis; thiamine diphosphate biosynthesis.</text>
</comment>
<comment type="subcellular location">
    <subcellularLocation>
        <location evidence="1">Cytoplasm</location>
    </subcellularLocation>
</comment>
<comment type="similarity">
    <text evidence="1">Belongs to the ThiI family.</text>
</comment>
<gene>
    <name evidence="1" type="primary">thiI</name>
    <name type="ordered locus">LVIS_1255</name>
</gene>
<evidence type="ECO:0000255" key="1">
    <source>
        <dbReference type="HAMAP-Rule" id="MF_00021"/>
    </source>
</evidence>